<evidence type="ECO:0000255" key="1">
    <source>
        <dbReference type="HAMAP-Rule" id="MF_00298"/>
    </source>
</evidence>
<evidence type="ECO:0000256" key="2">
    <source>
        <dbReference type="SAM" id="MobiDB-lite"/>
    </source>
</evidence>
<name>RPPH_CUPPJ</name>
<reference key="1">
    <citation type="journal article" date="2010" name="PLoS ONE">
        <title>The complete multipartite genome sequence of Cupriavidus necator JMP134, a versatile pollutant degrader.</title>
        <authorList>
            <person name="Lykidis A."/>
            <person name="Perez-Pantoja D."/>
            <person name="Ledger T."/>
            <person name="Mavromatis K."/>
            <person name="Anderson I.J."/>
            <person name="Ivanova N.N."/>
            <person name="Hooper S.D."/>
            <person name="Lapidus A."/>
            <person name="Lucas S."/>
            <person name="Gonzalez B."/>
            <person name="Kyrpides N.C."/>
        </authorList>
    </citation>
    <scope>NUCLEOTIDE SEQUENCE [LARGE SCALE GENOMIC DNA]</scope>
    <source>
        <strain>JMP134 / LMG 1197</strain>
    </source>
</reference>
<sequence>MLDREGFRPNVGIILINARNEVFWGKRIGEHSWQFPQGGIKYGETPEQAMYRELHEEIGLLPEHVRIVGRTRDWLRYEVPDKFIRREIRGHYRGQKQIWFLLRMAGRDCDVHLRATEHPEFDAWRWSDYWVPLEAVIEFKRDVYQLALTELSRFLNRNPRVPLSPYGVHHGRHGSGQRYAQQPGQPPTLAQRRPLQPVTQVAPVAPAAEAVQAVESDAVLPATPAPNPTES</sequence>
<organism>
    <name type="scientific">Cupriavidus pinatubonensis (strain JMP 134 / LMG 1197)</name>
    <name type="common">Cupriavidus necator (strain JMP 134)</name>
    <dbReference type="NCBI Taxonomy" id="264198"/>
    <lineage>
        <taxon>Bacteria</taxon>
        <taxon>Pseudomonadati</taxon>
        <taxon>Pseudomonadota</taxon>
        <taxon>Betaproteobacteria</taxon>
        <taxon>Burkholderiales</taxon>
        <taxon>Burkholderiaceae</taxon>
        <taxon>Cupriavidus</taxon>
    </lineage>
</organism>
<protein>
    <recommendedName>
        <fullName evidence="1">RNA pyrophosphohydrolase</fullName>
        <ecNumber evidence="1">3.6.1.-</ecNumber>
    </recommendedName>
    <alternativeName>
        <fullName evidence="1">(Di)nucleoside polyphosphate hydrolase</fullName>
    </alternativeName>
</protein>
<proteinExistence type="inferred from homology"/>
<accession>Q46X20</accession>
<comment type="function">
    <text evidence="1">Accelerates the degradation of transcripts by removing pyrophosphate from the 5'-end of triphosphorylated RNA, leading to a more labile monophosphorylated state that can stimulate subsequent ribonuclease cleavage.</text>
</comment>
<comment type="cofactor">
    <cofactor evidence="1">
        <name>a divalent metal cation</name>
        <dbReference type="ChEBI" id="CHEBI:60240"/>
    </cofactor>
</comment>
<comment type="similarity">
    <text evidence="1">Belongs to the Nudix hydrolase family. RppH subfamily.</text>
</comment>
<gene>
    <name evidence="1" type="primary">rppH</name>
    <name evidence="1" type="synonym">nudH</name>
    <name type="ordered locus">Reut_A2953</name>
</gene>
<keyword id="KW-0378">Hydrolase</keyword>
<dbReference type="EC" id="3.6.1.-" evidence="1"/>
<dbReference type="EMBL" id="CP000090">
    <property type="protein sequence ID" value="AAZ62313.1"/>
    <property type="molecule type" value="Genomic_DNA"/>
</dbReference>
<dbReference type="SMR" id="Q46X20"/>
<dbReference type="STRING" id="264198.Reut_A2953"/>
<dbReference type="KEGG" id="reu:Reut_A2953"/>
<dbReference type="eggNOG" id="COG0494">
    <property type="taxonomic scope" value="Bacteria"/>
</dbReference>
<dbReference type="HOGENOM" id="CLU_087195_1_1_4"/>
<dbReference type="OrthoDB" id="9816040at2"/>
<dbReference type="GO" id="GO:0016462">
    <property type="term" value="F:pyrophosphatase activity"/>
    <property type="evidence" value="ECO:0007669"/>
    <property type="project" value="UniProtKB-ARBA"/>
</dbReference>
<dbReference type="CDD" id="cd03671">
    <property type="entry name" value="NUDIX_Ap4A_hydrolase_plant_like"/>
    <property type="match status" value="1"/>
</dbReference>
<dbReference type="Gene3D" id="3.90.79.10">
    <property type="entry name" value="Nucleoside Triphosphate Pyrophosphohydrolase"/>
    <property type="match status" value="1"/>
</dbReference>
<dbReference type="HAMAP" id="MF_00298">
    <property type="entry name" value="Nudix_RppH"/>
    <property type="match status" value="1"/>
</dbReference>
<dbReference type="InterPro" id="IPR020476">
    <property type="entry name" value="Nudix_hydrolase"/>
</dbReference>
<dbReference type="InterPro" id="IPR015797">
    <property type="entry name" value="NUDIX_hydrolase-like_dom_sf"/>
</dbReference>
<dbReference type="InterPro" id="IPR020084">
    <property type="entry name" value="NUDIX_hydrolase_CS"/>
</dbReference>
<dbReference type="InterPro" id="IPR000086">
    <property type="entry name" value="NUDIX_hydrolase_dom"/>
</dbReference>
<dbReference type="InterPro" id="IPR022927">
    <property type="entry name" value="RppH"/>
</dbReference>
<dbReference type="NCBIfam" id="NF001935">
    <property type="entry name" value="PRK00714.1-2"/>
    <property type="match status" value="1"/>
</dbReference>
<dbReference type="NCBIfam" id="NF001937">
    <property type="entry name" value="PRK00714.1-4"/>
    <property type="match status" value="1"/>
</dbReference>
<dbReference type="NCBIfam" id="NF001938">
    <property type="entry name" value="PRK00714.1-5"/>
    <property type="match status" value="1"/>
</dbReference>
<dbReference type="PANTHER" id="PTHR43736">
    <property type="entry name" value="ADP-RIBOSE PYROPHOSPHATASE"/>
    <property type="match status" value="1"/>
</dbReference>
<dbReference type="PANTHER" id="PTHR43736:SF1">
    <property type="entry name" value="DIHYDRONEOPTERIN TRIPHOSPHATE DIPHOSPHATASE"/>
    <property type="match status" value="1"/>
</dbReference>
<dbReference type="Pfam" id="PF00293">
    <property type="entry name" value="NUDIX"/>
    <property type="match status" value="1"/>
</dbReference>
<dbReference type="PRINTS" id="PR00502">
    <property type="entry name" value="NUDIXFAMILY"/>
</dbReference>
<dbReference type="SUPFAM" id="SSF55811">
    <property type="entry name" value="Nudix"/>
    <property type="match status" value="1"/>
</dbReference>
<dbReference type="PROSITE" id="PS51462">
    <property type="entry name" value="NUDIX"/>
    <property type="match status" value="1"/>
</dbReference>
<dbReference type="PROSITE" id="PS00893">
    <property type="entry name" value="NUDIX_BOX"/>
    <property type="match status" value="1"/>
</dbReference>
<feature type="chain" id="PRO_0000231929" description="RNA pyrophosphohydrolase">
    <location>
        <begin position="1"/>
        <end position="231"/>
    </location>
</feature>
<feature type="domain" description="Nudix hydrolase" evidence="1">
    <location>
        <begin position="6"/>
        <end position="149"/>
    </location>
</feature>
<feature type="region of interest" description="Disordered" evidence="2">
    <location>
        <begin position="168"/>
        <end position="200"/>
    </location>
</feature>
<feature type="short sequence motif" description="Nudix box">
    <location>
        <begin position="38"/>
        <end position="59"/>
    </location>
</feature>